<comment type="function">
    <text evidence="1">Part of the twin-arginine translocation (Tat) system that transports large folded proteins containing a characteristic twin-arginine motif in their signal peptide across membranes. Together with TatC, TatB is part of a receptor directly interacting with Tat signal peptides. TatB may form an oligomeric binding site that transiently accommodates folded Tat precursor proteins before their translocation.</text>
</comment>
<comment type="subunit">
    <text evidence="1">The Tat system comprises two distinct complexes: a TatABC complex, containing multiple copies of TatA, TatB and TatC subunits, and a separate TatA complex, containing only TatA subunits. Substrates initially bind to the TatABC complex, which probably triggers association of the separate TatA complex to form the active translocon.</text>
</comment>
<comment type="subcellular location">
    <subcellularLocation>
        <location evidence="1">Cell inner membrane</location>
        <topology evidence="1">Single-pass membrane protein</topology>
    </subcellularLocation>
</comment>
<comment type="similarity">
    <text evidence="1">Belongs to the TatB family.</text>
</comment>
<evidence type="ECO:0000255" key="1">
    <source>
        <dbReference type="HAMAP-Rule" id="MF_00237"/>
    </source>
</evidence>
<evidence type="ECO:0000256" key="2">
    <source>
        <dbReference type="SAM" id="MobiDB-lite"/>
    </source>
</evidence>
<sequence>MFDGIGFMELLLIGIVGLVVLGPERLPTAVRSVSSWIRAMKKMANSVKDELEQELKIEQLHSDLKNAESQGLKNLSPELQDSINQLKEAAQSVNRPYQVEDVPAAKDVPAKEMPTSETSTATNANSDKPNG</sequence>
<name>TATB_SHEHH</name>
<reference key="1">
    <citation type="submission" date="2008-01" db="EMBL/GenBank/DDBJ databases">
        <title>Complete sequence of Shewanella halifaxensis HAW-EB4.</title>
        <authorList>
            <consortium name="US DOE Joint Genome Institute"/>
            <person name="Copeland A."/>
            <person name="Lucas S."/>
            <person name="Lapidus A."/>
            <person name="Glavina del Rio T."/>
            <person name="Dalin E."/>
            <person name="Tice H."/>
            <person name="Bruce D."/>
            <person name="Goodwin L."/>
            <person name="Pitluck S."/>
            <person name="Sims D."/>
            <person name="Brettin T."/>
            <person name="Detter J.C."/>
            <person name="Han C."/>
            <person name="Kuske C.R."/>
            <person name="Schmutz J."/>
            <person name="Larimer F."/>
            <person name="Land M."/>
            <person name="Hauser L."/>
            <person name="Kyrpides N."/>
            <person name="Kim E."/>
            <person name="Zhao J.-S."/>
            <person name="Richardson P."/>
        </authorList>
    </citation>
    <scope>NUCLEOTIDE SEQUENCE [LARGE SCALE GENOMIC DNA]</scope>
    <source>
        <strain>HAW-EB4</strain>
    </source>
</reference>
<protein>
    <recommendedName>
        <fullName evidence="1">Sec-independent protein translocase protein TatB</fullName>
    </recommendedName>
</protein>
<dbReference type="EMBL" id="CP000931">
    <property type="protein sequence ID" value="ABZ78423.1"/>
    <property type="molecule type" value="Genomic_DNA"/>
</dbReference>
<dbReference type="RefSeq" id="WP_012278940.1">
    <property type="nucleotide sequence ID" value="NC_010334.1"/>
</dbReference>
<dbReference type="SMR" id="B0TJ20"/>
<dbReference type="STRING" id="458817.Shal_3883"/>
<dbReference type="KEGG" id="shl:Shal_3883"/>
<dbReference type="eggNOG" id="COG1826">
    <property type="taxonomic scope" value="Bacteria"/>
</dbReference>
<dbReference type="HOGENOM" id="CLU_086034_1_0_6"/>
<dbReference type="OrthoDB" id="9816005at2"/>
<dbReference type="Proteomes" id="UP000001317">
    <property type="component" value="Chromosome"/>
</dbReference>
<dbReference type="GO" id="GO:0033281">
    <property type="term" value="C:TAT protein transport complex"/>
    <property type="evidence" value="ECO:0007669"/>
    <property type="project" value="UniProtKB-UniRule"/>
</dbReference>
<dbReference type="GO" id="GO:0008320">
    <property type="term" value="F:protein transmembrane transporter activity"/>
    <property type="evidence" value="ECO:0007669"/>
    <property type="project" value="UniProtKB-UniRule"/>
</dbReference>
<dbReference type="GO" id="GO:0043953">
    <property type="term" value="P:protein transport by the Tat complex"/>
    <property type="evidence" value="ECO:0007669"/>
    <property type="project" value="UniProtKB-UniRule"/>
</dbReference>
<dbReference type="Gene3D" id="1.20.5.3310">
    <property type="match status" value="1"/>
</dbReference>
<dbReference type="HAMAP" id="MF_00237">
    <property type="entry name" value="TatB"/>
    <property type="match status" value="1"/>
</dbReference>
<dbReference type="InterPro" id="IPR003369">
    <property type="entry name" value="TatA/B/E"/>
</dbReference>
<dbReference type="InterPro" id="IPR018448">
    <property type="entry name" value="TatB"/>
</dbReference>
<dbReference type="NCBIfam" id="TIGR01410">
    <property type="entry name" value="tatB"/>
    <property type="match status" value="1"/>
</dbReference>
<dbReference type="PANTHER" id="PTHR33162">
    <property type="entry name" value="SEC-INDEPENDENT PROTEIN TRANSLOCASE PROTEIN TATA, CHLOROPLASTIC"/>
    <property type="match status" value="1"/>
</dbReference>
<dbReference type="PANTHER" id="PTHR33162:SF1">
    <property type="entry name" value="SEC-INDEPENDENT PROTEIN TRANSLOCASE PROTEIN TATA, CHLOROPLASTIC"/>
    <property type="match status" value="1"/>
</dbReference>
<dbReference type="Pfam" id="PF02416">
    <property type="entry name" value="TatA_B_E"/>
    <property type="match status" value="1"/>
</dbReference>
<dbReference type="PRINTS" id="PR01506">
    <property type="entry name" value="TATBPROTEIN"/>
</dbReference>
<keyword id="KW-0997">Cell inner membrane</keyword>
<keyword id="KW-1003">Cell membrane</keyword>
<keyword id="KW-0472">Membrane</keyword>
<keyword id="KW-0653">Protein transport</keyword>
<keyword id="KW-0811">Translocation</keyword>
<keyword id="KW-0812">Transmembrane</keyword>
<keyword id="KW-1133">Transmembrane helix</keyword>
<keyword id="KW-0813">Transport</keyword>
<proteinExistence type="inferred from homology"/>
<organism>
    <name type="scientific">Shewanella halifaxensis (strain HAW-EB4)</name>
    <dbReference type="NCBI Taxonomy" id="458817"/>
    <lineage>
        <taxon>Bacteria</taxon>
        <taxon>Pseudomonadati</taxon>
        <taxon>Pseudomonadota</taxon>
        <taxon>Gammaproteobacteria</taxon>
        <taxon>Alteromonadales</taxon>
        <taxon>Shewanellaceae</taxon>
        <taxon>Shewanella</taxon>
    </lineage>
</organism>
<accession>B0TJ20</accession>
<feature type="chain" id="PRO_1000078326" description="Sec-independent protein translocase protein TatB">
    <location>
        <begin position="1"/>
        <end position="131"/>
    </location>
</feature>
<feature type="transmembrane region" description="Helical" evidence="1">
    <location>
        <begin position="2"/>
        <end position="22"/>
    </location>
</feature>
<feature type="region of interest" description="Disordered" evidence="2">
    <location>
        <begin position="86"/>
        <end position="131"/>
    </location>
</feature>
<feature type="compositionally biased region" description="Polar residues" evidence="2">
    <location>
        <begin position="86"/>
        <end position="95"/>
    </location>
</feature>
<feature type="compositionally biased region" description="Low complexity" evidence="2">
    <location>
        <begin position="115"/>
        <end position="131"/>
    </location>
</feature>
<gene>
    <name evidence="1" type="primary">tatB</name>
    <name type="ordered locus">Shal_3883</name>
</gene>